<gene>
    <name evidence="1" type="primary">aroD</name>
    <name type="ordered locus">TGAM_1596</name>
</gene>
<name>AROD_THEGJ</name>
<evidence type="ECO:0000255" key="1">
    <source>
        <dbReference type="HAMAP-Rule" id="MF_00214"/>
    </source>
</evidence>
<protein>
    <recommendedName>
        <fullName evidence="1">3-dehydroquinate dehydratase</fullName>
        <shortName evidence="1">3-dehydroquinase</shortName>
        <ecNumber evidence="1">4.2.1.10</ecNumber>
    </recommendedName>
    <alternativeName>
        <fullName evidence="1">Type I DHQase</fullName>
    </alternativeName>
    <alternativeName>
        <fullName evidence="1">Type I dehydroquinase</fullName>
        <shortName evidence="1">DHQ1</shortName>
    </alternativeName>
</protein>
<accession>C5A786</accession>
<organism>
    <name type="scientific">Thermococcus gammatolerans (strain DSM 15229 / JCM 11827 / EJ3)</name>
    <dbReference type="NCBI Taxonomy" id="593117"/>
    <lineage>
        <taxon>Archaea</taxon>
        <taxon>Methanobacteriati</taxon>
        <taxon>Methanobacteriota</taxon>
        <taxon>Thermococci</taxon>
        <taxon>Thermococcales</taxon>
        <taxon>Thermococcaceae</taxon>
        <taxon>Thermococcus</taxon>
    </lineage>
</organism>
<keyword id="KW-0028">Amino-acid biosynthesis</keyword>
<keyword id="KW-0057">Aromatic amino acid biosynthesis</keyword>
<keyword id="KW-0456">Lyase</keyword>
<keyword id="KW-1185">Reference proteome</keyword>
<keyword id="KW-0704">Schiff base</keyword>
<sequence length="213" mass="24132">MIAGVVVARNAREAVAKIREGNADLYEVRLDRFESFELAPLKPFADRLIITIRRAEEGGFRRIPEEERLELYRRAMTLKPRYVDVEARSEIAGEVMREARKRRVGVILSHHDFEGTPPFETLMEILQGMASMAPDVVKIVPTANSHLDNVRVLRLYEHAENLVAFCMGPLGRISRLFSALLAPFTYASLEKAVAPGQMSVEELRQLLVMLDGR</sequence>
<proteinExistence type="inferred from homology"/>
<dbReference type="EC" id="4.2.1.10" evidence="1"/>
<dbReference type="EMBL" id="CP001398">
    <property type="protein sequence ID" value="ACS34098.1"/>
    <property type="molecule type" value="Genomic_DNA"/>
</dbReference>
<dbReference type="RefSeq" id="WP_015859209.1">
    <property type="nucleotide sequence ID" value="NC_012804.1"/>
</dbReference>
<dbReference type="SMR" id="C5A786"/>
<dbReference type="STRING" id="593117.TGAM_1596"/>
<dbReference type="PaxDb" id="593117-TGAM_1596"/>
<dbReference type="GeneID" id="7988490"/>
<dbReference type="KEGG" id="tga:TGAM_1596"/>
<dbReference type="PATRIC" id="fig|593117.10.peg.1600"/>
<dbReference type="eggNOG" id="arCOG02097">
    <property type="taxonomic scope" value="Archaea"/>
</dbReference>
<dbReference type="HOGENOM" id="CLU_064444_2_1_2"/>
<dbReference type="OrthoDB" id="34329at2157"/>
<dbReference type="UniPathway" id="UPA00053">
    <property type="reaction ID" value="UER00086"/>
</dbReference>
<dbReference type="Proteomes" id="UP000001488">
    <property type="component" value="Chromosome"/>
</dbReference>
<dbReference type="GO" id="GO:0003855">
    <property type="term" value="F:3-dehydroquinate dehydratase activity"/>
    <property type="evidence" value="ECO:0007669"/>
    <property type="project" value="UniProtKB-UniRule"/>
</dbReference>
<dbReference type="GO" id="GO:0046279">
    <property type="term" value="P:3,4-dihydroxybenzoate biosynthetic process"/>
    <property type="evidence" value="ECO:0007669"/>
    <property type="project" value="TreeGrafter"/>
</dbReference>
<dbReference type="GO" id="GO:0008652">
    <property type="term" value="P:amino acid biosynthetic process"/>
    <property type="evidence" value="ECO:0007669"/>
    <property type="project" value="UniProtKB-KW"/>
</dbReference>
<dbReference type="GO" id="GO:0009073">
    <property type="term" value="P:aromatic amino acid family biosynthetic process"/>
    <property type="evidence" value="ECO:0007669"/>
    <property type="project" value="UniProtKB-KW"/>
</dbReference>
<dbReference type="GO" id="GO:0009423">
    <property type="term" value="P:chorismate biosynthetic process"/>
    <property type="evidence" value="ECO:0007669"/>
    <property type="project" value="UniProtKB-UniRule"/>
</dbReference>
<dbReference type="CDD" id="cd00502">
    <property type="entry name" value="DHQase_I"/>
    <property type="match status" value="1"/>
</dbReference>
<dbReference type="Gene3D" id="3.20.20.70">
    <property type="entry name" value="Aldolase class I"/>
    <property type="match status" value="1"/>
</dbReference>
<dbReference type="HAMAP" id="MF_00214">
    <property type="entry name" value="AroD"/>
    <property type="match status" value="1"/>
</dbReference>
<dbReference type="InterPro" id="IPR013785">
    <property type="entry name" value="Aldolase_TIM"/>
</dbReference>
<dbReference type="InterPro" id="IPR001381">
    <property type="entry name" value="DHquinase_I"/>
</dbReference>
<dbReference type="InterPro" id="IPR050146">
    <property type="entry name" value="Type-I_3-dehydroquinase"/>
</dbReference>
<dbReference type="NCBIfam" id="TIGR01093">
    <property type="entry name" value="aroD"/>
    <property type="match status" value="1"/>
</dbReference>
<dbReference type="NCBIfam" id="NF002683">
    <property type="entry name" value="PRK02412.2-2"/>
    <property type="match status" value="1"/>
</dbReference>
<dbReference type="PANTHER" id="PTHR43699">
    <property type="entry name" value="3-DEHYDROQUINATE DEHYDRATASE"/>
    <property type="match status" value="1"/>
</dbReference>
<dbReference type="PANTHER" id="PTHR43699:SF1">
    <property type="entry name" value="3-DEHYDROQUINATE DEHYDRATASE"/>
    <property type="match status" value="1"/>
</dbReference>
<dbReference type="Pfam" id="PF01487">
    <property type="entry name" value="DHquinase_I"/>
    <property type="match status" value="1"/>
</dbReference>
<dbReference type="SUPFAM" id="SSF51569">
    <property type="entry name" value="Aldolase"/>
    <property type="match status" value="1"/>
</dbReference>
<comment type="function">
    <text evidence="1">Involved in the third step of the chorismate pathway, which leads to the biosynthesis of aromatic amino acids. Catalyzes the cis-dehydration of 3-dehydroquinate (DHQ) and introduces the first double bond of the aromatic ring to yield 3-dehydroshikimate.</text>
</comment>
<comment type="catalytic activity">
    <reaction evidence="1">
        <text>3-dehydroquinate = 3-dehydroshikimate + H2O</text>
        <dbReference type="Rhea" id="RHEA:21096"/>
        <dbReference type="ChEBI" id="CHEBI:15377"/>
        <dbReference type="ChEBI" id="CHEBI:16630"/>
        <dbReference type="ChEBI" id="CHEBI:32364"/>
        <dbReference type="EC" id="4.2.1.10"/>
    </reaction>
</comment>
<comment type="pathway">
    <text evidence="1">Metabolic intermediate biosynthesis; chorismate biosynthesis; chorismate from D-erythrose 4-phosphate and phosphoenolpyruvate: step 3/7.</text>
</comment>
<comment type="subunit">
    <text evidence="1">Homodimer.</text>
</comment>
<comment type="similarity">
    <text evidence="1">Belongs to the type-I 3-dehydroquinase family.</text>
</comment>
<reference key="1">
    <citation type="journal article" date="2007" name="Genome Biol.">
        <title>Genome analysis and genome-wide proteomics of Thermococcus gammatolerans, the most radioresistant organism known amongst the Archaea.</title>
        <authorList>
            <person name="Zivanovic Y."/>
            <person name="Armengaud J."/>
            <person name="Lagorce A."/>
            <person name="Leplat C."/>
            <person name="Guerin P."/>
            <person name="Dutertre M."/>
            <person name="Anthouard V."/>
            <person name="Forterre P."/>
            <person name="Wincker P."/>
            <person name="Confalonieri F."/>
        </authorList>
    </citation>
    <scope>NUCLEOTIDE SEQUENCE [LARGE SCALE GENOMIC DNA]</scope>
    <source>
        <strain>DSM 15229 / JCM 11827 / EJ3</strain>
    </source>
</reference>
<feature type="chain" id="PRO_1000204214" description="3-dehydroquinate dehydratase">
    <location>
        <begin position="1"/>
        <end position="213"/>
    </location>
</feature>
<feature type="active site" description="Proton donor/acceptor" evidence="1">
    <location>
        <position position="111"/>
    </location>
</feature>
<feature type="active site" description="Schiff-base intermediate with substrate" evidence="1">
    <location>
        <position position="138"/>
    </location>
</feature>
<feature type="binding site" evidence="1">
    <location>
        <begin position="27"/>
        <end position="29"/>
    </location>
    <ligand>
        <name>3-dehydroquinate</name>
        <dbReference type="ChEBI" id="CHEBI:32364"/>
    </ligand>
</feature>
<feature type="binding site" evidence="1">
    <location>
        <position position="53"/>
    </location>
    <ligand>
        <name>3-dehydroquinate</name>
        <dbReference type="ChEBI" id="CHEBI:32364"/>
    </ligand>
</feature>
<feature type="binding site" evidence="1">
    <location>
        <position position="175"/>
    </location>
    <ligand>
        <name>3-dehydroquinate</name>
        <dbReference type="ChEBI" id="CHEBI:32364"/>
    </ligand>
</feature>
<feature type="binding site" evidence="1">
    <location>
        <position position="197"/>
    </location>
    <ligand>
        <name>3-dehydroquinate</name>
        <dbReference type="ChEBI" id="CHEBI:32364"/>
    </ligand>
</feature>